<keyword id="KW-0240">DNA-directed RNA polymerase</keyword>
<keyword id="KW-0460">Magnesium</keyword>
<keyword id="KW-0479">Metal-binding</keyword>
<keyword id="KW-0548">Nucleotidyltransferase</keyword>
<keyword id="KW-0539">Nucleus</keyword>
<keyword id="KW-1185">Reference proteome</keyword>
<keyword id="KW-0804">Transcription</keyword>
<keyword id="KW-0808">Transferase</keyword>
<keyword id="KW-0862">Zinc</keyword>
<keyword id="KW-0863">Zinc-finger</keyword>
<feature type="chain" id="PRO_0000048088" description="DNA-directed RNA polymerase II subunit RPB2">
    <location>
        <begin position="1"/>
        <end position="1222"/>
    </location>
</feature>
<feature type="zinc finger region" description="C4-type">
    <location>
        <begin position="1161"/>
        <end position="1183"/>
    </location>
</feature>
<feature type="binding site" evidence="1">
    <location>
        <position position="835"/>
    </location>
    <ligand>
        <name>Mg(2+)</name>
        <dbReference type="ChEBI" id="CHEBI:18420"/>
        <note>ligand shared with RPB1</note>
    </ligand>
</feature>
<feature type="binding site" evidence="1">
    <location>
        <position position="1161"/>
    </location>
    <ligand>
        <name>Zn(2+)</name>
        <dbReference type="ChEBI" id="CHEBI:29105"/>
    </ligand>
</feature>
<feature type="binding site" evidence="1">
    <location>
        <position position="1164"/>
    </location>
    <ligand>
        <name>Zn(2+)</name>
        <dbReference type="ChEBI" id="CHEBI:29105"/>
    </ligand>
</feature>
<feature type="binding site" evidence="1">
    <location>
        <position position="1180"/>
    </location>
    <ligand>
        <name>Zn(2+)</name>
        <dbReference type="ChEBI" id="CHEBI:29105"/>
    </ligand>
</feature>
<feature type="binding site" evidence="1">
    <location>
        <position position="1183"/>
    </location>
    <ligand>
        <name>Zn(2+)</name>
        <dbReference type="ChEBI" id="CHEBI:29105"/>
    </ligand>
</feature>
<accession>Q753Q4</accession>
<accession>Q6JEI5</accession>
<reference key="1">
    <citation type="journal article" date="2004" name="Science">
        <title>The Ashbya gossypii genome as a tool for mapping the ancient Saccharomyces cerevisiae genome.</title>
        <authorList>
            <person name="Dietrich F.S."/>
            <person name="Voegeli S."/>
            <person name="Brachat S."/>
            <person name="Lerch A."/>
            <person name="Gates K."/>
            <person name="Steiner S."/>
            <person name="Mohr C."/>
            <person name="Poehlmann R."/>
            <person name="Luedi P."/>
            <person name="Choi S."/>
            <person name="Wing R.A."/>
            <person name="Flavier A."/>
            <person name="Gaffney T.D."/>
            <person name="Philippsen P."/>
        </authorList>
    </citation>
    <scope>NUCLEOTIDE SEQUENCE [LARGE SCALE GENOMIC DNA]</scope>
    <source>
        <strain>ATCC 10895 / CBS 109.51 / FGSC 9923 / NRRL Y-1056</strain>
    </source>
</reference>
<reference key="2">
    <citation type="journal article" date="2013" name="G3 (Bethesda)">
        <title>Genomes of Ashbya fungi isolated from insects reveal four mating-type loci, numerous translocations, lack of transposons, and distinct gene duplications.</title>
        <authorList>
            <person name="Dietrich F.S."/>
            <person name="Voegeli S."/>
            <person name="Kuo S."/>
            <person name="Philippsen P."/>
        </authorList>
    </citation>
    <scope>GENOME REANNOTATION</scope>
    <source>
        <strain>ATCC 10895 / CBS 109.51 / FGSC 9923 / NRRL Y-1056</strain>
    </source>
</reference>
<reference key="3">
    <citation type="submission" date="2003-12" db="EMBL/GenBank/DDBJ databases">
        <title>Molecular phylogeny and evolution of Candida and related species within the order saccharomycetales as inferred from multilocus sequence analysis.</title>
        <authorList>
            <person name="Diezmann S."/>
            <person name="Cox C.J."/>
            <person name="Schoenian G."/>
            <person name="Vilgalys R.J."/>
            <person name="Mitchell T.G."/>
        </authorList>
    </citation>
    <scope>NUCLEOTIDE SEQUENCE [GENOMIC DNA] OF 399-755</scope>
    <source>
        <strain>ATCC 8717 / IMI 31268</strain>
    </source>
</reference>
<comment type="function">
    <text evidence="1">DNA-dependent RNA polymerase catalyzes the transcription of DNA into RNA using the four ribonucleoside triphosphates as substrates. Second largest component of RNA polymerase II which synthesizes mRNA precursors and many functional non-coding RNAs. Proposed to contribute to the polymerase catalytic activity and forms the polymerase active center together with the largest subunit. Pol II is the central component of the basal RNA polymerase II transcription machinery. It is composed of mobile elements that move relative to each other. RPB2 is part of the core element with the central large cleft, the clamp element that moves to open and close the cleft and the jaws that are thought to grab the incoming DNA template (By similarity).</text>
</comment>
<comment type="catalytic activity">
    <reaction>
        <text>RNA(n) + a ribonucleoside 5'-triphosphate = RNA(n+1) + diphosphate</text>
        <dbReference type="Rhea" id="RHEA:21248"/>
        <dbReference type="Rhea" id="RHEA-COMP:14527"/>
        <dbReference type="Rhea" id="RHEA-COMP:17342"/>
        <dbReference type="ChEBI" id="CHEBI:33019"/>
        <dbReference type="ChEBI" id="CHEBI:61557"/>
        <dbReference type="ChEBI" id="CHEBI:140395"/>
        <dbReference type="EC" id="2.7.7.6"/>
    </reaction>
</comment>
<comment type="subunit">
    <text evidence="1">Component of the RNA polymerase II (Pol II) complex consisting of 12 subunits.</text>
</comment>
<comment type="subcellular location">
    <subcellularLocation>
        <location evidence="1">Nucleus</location>
    </subcellularLocation>
</comment>
<comment type="miscellaneous">
    <text evidence="1">The binding of ribonucleoside triphosphate to the RNA polymerase II transcribing complex probably involves a two-step mechanism. The initial binding seems to occur at the entry (E) site and involves a magnesium ion coordinated by three conserved aspartate residues of the two largest RNA Pol II subunits (By similarity).</text>
</comment>
<comment type="similarity">
    <text evidence="2">Belongs to the RNA polymerase beta chain family.</text>
</comment>
<dbReference type="EC" id="2.7.7.6"/>
<dbReference type="EMBL" id="AE016819">
    <property type="protein sequence ID" value="AAS53775.1"/>
    <property type="molecule type" value="Genomic_DNA"/>
</dbReference>
<dbReference type="EMBL" id="AY497595">
    <property type="protein sequence ID" value="AAT12521.1"/>
    <property type="molecule type" value="Genomic_DNA"/>
</dbReference>
<dbReference type="RefSeq" id="NP_985951.1">
    <property type="nucleotide sequence ID" value="NM_211306.1"/>
</dbReference>
<dbReference type="SMR" id="Q753Q4"/>
<dbReference type="FunCoup" id="Q753Q4">
    <property type="interactions" value="1374"/>
</dbReference>
<dbReference type="STRING" id="284811.Q753Q4"/>
<dbReference type="EnsemblFungi" id="AAS53775">
    <property type="protein sequence ID" value="AAS53775"/>
    <property type="gene ID" value="AGOS_AFR404C"/>
</dbReference>
<dbReference type="GeneID" id="4622223"/>
<dbReference type="KEGG" id="ago:AGOS_AFR404C"/>
<dbReference type="eggNOG" id="KOG0214">
    <property type="taxonomic scope" value="Eukaryota"/>
</dbReference>
<dbReference type="HOGENOM" id="CLU_000524_5_2_1"/>
<dbReference type="InParanoid" id="Q753Q4"/>
<dbReference type="OMA" id="CYDRNDS"/>
<dbReference type="OrthoDB" id="10248617at2759"/>
<dbReference type="Proteomes" id="UP000000591">
    <property type="component" value="Chromosome VI"/>
</dbReference>
<dbReference type="GO" id="GO:0005739">
    <property type="term" value="C:mitochondrion"/>
    <property type="evidence" value="ECO:0007669"/>
    <property type="project" value="GOC"/>
</dbReference>
<dbReference type="GO" id="GO:0005721">
    <property type="term" value="C:pericentric heterochromatin"/>
    <property type="evidence" value="ECO:0007669"/>
    <property type="project" value="EnsemblFungi"/>
</dbReference>
<dbReference type="GO" id="GO:0005665">
    <property type="term" value="C:RNA polymerase II, core complex"/>
    <property type="evidence" value="ECO:0000318"/>
    <property type="project" value="GO_Central"/>
</dbReference>
<dbReference type="GO" id="GO:0003677">
    <property type="term" value="F:DNA binding"/>
    <property type="evidence" value="ECO:0007669"/>
    <property type="project" value="EnsemblFungi"/>
</dbReference>
<dbReference type="GO" id="GO:0003899">
    <property type="term" value="F:DNA-directed RNA polymerase activity"/>
    <property type="evidence" value="ECO:0007669"/>
    <property type="project" value="UniProtKB-EC"/>
</dbReference>
<dbReference type="GO" id="GO:0032549">
    <property type="term" value="F:ribonucleoside binding"/>
    <property type="evidence" value="ECO:0007669"/>
    <property type="project" value="InterPro"/>
</dbReference>
<dbReference type="GO" id="GO:0003723">
    <property type="term" value="F:RNA binding"/>
    <property type="evidence" value="ECO:0007669"/>
    <property type="project" value="EnsemblFungi"/>
</dbReference>
<dbReference type="GO" id="GO:0003968">
    <property type="term" value="F:RNA-directed RNA polymerase activity"/>
    <property type="evidence" value="ECO:0007669"/>
    <property type="project" value="EnsemblFungi"/>
</dbReference>
<dbReference type="GO" id="GO:0008270">
    <property type="term" value="F:zinc ion binding"/>
    <property type="evidence" value="ECO:0007669"/>
    <property type="project" value="UniProtKB-KW"/>
</dbReference>
<dbReference type="GO" id="GO:0140727">
    <property type="term" value="P:siRNA-mediated pericentric heterochromatin formation"/>
    <property type="evidence" value="ECO:0007669"/>
    <property type="project" value="EnsemblFungi"/>
</dbReference>
<dbReference type="GO" id="GO:0006368">
    <property type="term" value="P:transcription elongation by RNA polymerase II"/>
    <property type="evidence" value="ECO:0007669"/>
    <property type="project" value="EnsemblFungi"/>
</dbReference>
<dbReference type="GO" id="GO:0006367">
    <property type="term" value="P:transcription initiation at RNA polymerase II promoter"/>
    <property type="evidence" value="ECO:0007669"/>
    <property type="project" value="EnsemblFungi"/>
</dbReference>
<dbReference type="CDD" id="cd00653">
    <property type="entry name" value="RNA_pol_B_RPB2"/>
    <property type="match status" value="1"/>
</dbReference>
<dbReference type="FunFam" id="2.40.270.10:FF:000006">
    <property type="entry name" value="DNA-directed RNA polymerase subunit beta"/>
    <property type="match status" value="1"/>
</dbReference>
<dbReference type="FunFam" id="2.40.50.150:FF:000002">
    <property type="entry name" value="DNA-directed RNA polymerase subunit beta"/>
    <property type="match status" value="1"/>
</dbReference>
<dbReference type="FunFam" id="3.90.1070.20:FF:000001">
    <property type="entry name" value="DNA-directed RNA polymerase subunit beta"/>
    <property type="match status" value="1"/>
</dbReference>
<dbReference type="FunFam" id="3.90.1100.10:FF:000005">
    <property type="entry name" value="DNA-directed RNA polymerase subunit beta"/>
    <property type="match status" value="1"/>
</dbReference>
<dbReference type="FunFam" id="3.90.1100.10:FF:000011">
    <property type="entry name" value="DNA-directed RNA polymerase subunit beta"/>
    <property type="match status" value="1"/>
</dbReference>
<dbReference type="FunFam" id="3.90.1110.10:FF:000003">
    <property type="entry name" value="DNA-directed RNA polymerase subunit beta"/>
    <property type="match status" value="1"/>
</dbReference>
<dbReference type="FunFam" id="3.90.1800.10:FF:000002">
    <property type="entry name" value="DNA-directed RNA polymerase subunit beta"/>
    <property type="match status" value="1"/>
</dbReference>
<dbReference type="Gene3D" id="2.40.50.150">
    <property type="match status" value="1"/>
</dbReference>
<dbReference type="Gene3D" id="3.90.1070.20">
    <property type="match status" value="1"/>
</dbReference>
<dbReference type="Gene3D" id="2.40.270.10">
    <property type="entry name" value="DNA-directed RNA polymerase, subunit 2, domain 6"/>
    <property type="match status" value="1"/>
</dbReference>
<dbReference type="Gene3D" id="3.90.1800.10">
    <property type="entry name" value="RNA polymerase alpha subunit dimerisation domain"/>
    <property type="match status" value="1"/>
</dbReference>
<dbReference type="Gene3D" id="3.90.1110.10">
    <property type="entry name" value="RNA polymerase Rpb2, domain 2"/>
    <property type="match status" value="1"/>
</dbReference>
<dbReference type="InterPro" id="IPR015712">
    <property type="entry name" value="DNA-dir_RNA_pol_su2"/>
</dbReference>
<dbReference type="InterPro" id="IPR007120">
    <property type="entry name" value="DNA-dir_RNAP_su2_dom"/>
</dbReference>
<dbReference type="InterPro" id="IPR037033">
    <property type="entry name" value="DNA-dir_RNAP_su2_hyb_sf"/>
</dbReference>
<dbReference type="InterPro" id="IPR007121">
    <property type="entry name" value="RNA_pol_bsu_CS"/>
</dbReference>
<dbReference type="InterPro" id="IPR007644">
    <property type="entry name" value="RNA_pol_bsu_protrusion"/>
</dbReference>
<dbReference type="InterPro" id="IPR007642">
    <property type="entry name" value="RNA_pol_Rpb2_2"/>
</dbReference>
<dbReference type="InterPro" id="IPR037034">
    <property type="entry name" value="RNA_pol_Rpb2_2_sf"/>
</dbReference>
<dbReference type="InterPro" id="IPR007645">
    <property type="entry name" value="RNA_pol_Rpb2_3"/>
</dbReference>
<dbReference type="InterPro" id="IPR007646">
    <property type="entry name" value="RNA_pol_Rpb2_4"/>
</dbReference>
<dbReference type="InterPro" id="IPR007647">
    <property type="entry name" value="RNA_pol_Rpb2_5"/>
</dbReference>
<dbReference type="InterPro" id="IPR007641">
    <property type="entry name" value="RNA_pol_Rpb2_7"/>
</dbReference>
<dbReference type="InterPro" id="IPR014724">
    <property type="entry name" value="RNA_pol_RPB2_OB-fold"/>
</dbReference>
<dbReference type="NCBIfam" id="NF007175">
    <property type="entry name" value="PRK09606.1"/>
    <property type="match status" value="1"/>
</dbReference>
<dbReference type="PANTHER" id="PTHR20856">
    <property type="entry name" value="DNA-DIRECTED RNA POLYMERASE I SUBUNIT 2"/>
    <property type="match status" value="1"/>
</dbReference>
<dbReference type="Pfam" id="PF04563">
    <property type="entry name" value="RNA_pol_Rpb2_1"/>
    <property type="match status" value="1"/>
</dbReference>
<dbReference type="Pfam" id="PF04561">
    <property type="entry name" value="RNA_pol_Rpb2_2"/>
    <property type="match status" value="1"/>
</dbReference>
<dbReference type="Pfam" id="PF04565">
    <property type="entry name" value="RNA_pol_Rpb2_3"/>
    <property type="match status" value="1"/>
</dbReference>
<dbReference type="Pfam" id="PF04566">
    <property type="entry name" value="RNA_pol_Rpb2_4"/>
    <property type="match status" value="1"/>
</dbReference>
<dbReference type="Pfam" id="PF04567">
    <property type="entry name" value="RNA_pol_Rpb2_5"/>
    <property type="match status" value="1"/>
</dbReference>
<dbReference type="Pfam" id="PF00562">
    <property type="entry name" value="RNA_pol_Rpb2_6"/>
    <property type="match status" value="1"/>
</dbReference>
<dbReference type="Pfam" id="PF04560">
    <property type="entry name" value="RNA_pol_Rpb2_7"/>
    <property type="match status" value="1"/>
</dbReference>
<dbReference type="SUPFAM" id="SSF64484">
    <property type="entry name" value="beta and beta-prime subunits of DNA dependent RNA-polymerase"/>
    <property type="match status" value="1"/>
</dbReference>
<dbReference type="PROSITE" id="PS01166">
    <property type="entry name" value="RNA_POL_BETA"/>
    <property type="match status" value="1"/>
</dbReference>
<sequence length="1222" mass="138617">MLEYYDDDAYVYDDDDEDAPITAEDSWTVISAFFREKGLVSQQLDSFNQFINYTIQDLILEDSTLILEQLAQHTTEADNISRKYEISFGKIYLAKPSMTESDGVSHAMYPQEARLRNLTYASGLFVEIKKRTYEAVDIPGRDLKYEIIQEESEDTEEGKIFIGRVPIMLRSKYCLLDDLSESDLYRLKECPFDMGGYFIINGSEKVLIAQERSAGNIVQVFKKSAPSPISHIAEIRSALEKGSRFISTLQVKLYGREGSTSRTIKATLPYIKQDIPIVIIFRALGIIPDGEILEHICYDQNDWQMLEMLKPCVEEGFVIQDRETALDFIGRRGTALGIKKEKRIQYAKDILQKEFLPHITQLEGFESRKAFFLGYMINRLLLCALDRKDQDDRDHFGKKRLDLAGPLLAQLFKTLFRKLTRDILRFMQRSVEEAKDFNLKLAVKATTITAGLKYALATGNWGEQKKAMSSRAGVSQVLNRYTYSSTLSHLRRTNTPIGRDGKLAKPRQLHNTHWGLVCPAETPEGQACGLVKNLSLMSCISVGTDPVPIITFLNEWGMEPLEDYVPHQSPDATRVFVNGVWHGIHRNPARLVDTIRKLRRKGDITAEVSIVRDIREKELKIFTDAGRVYRPLFVVADTQHADGHKDLKVRKGHIRKLMLTEYQDIEGGFEDEDINYTWTSLLNDGIVEYIDAEEEETILIAMQQEDLDPSVPQTVDPSDELDPARRIKAIHHSNTFTHCEIHPSMILGVAASVIPFPDHNQSPRNTYQSAMGKQAMGVFLTNYNVRMDTMANILYYPQKPLGTTRAMEYLKFRELPAGQNAIVAIACYSGYNQEDSMIMNQSSIDSGLFRSLFFRSYMDQEKRIGMSITESFEKPHRTNTLRMKHGTYEKLDDDGLIAPGVRVSGDDIIIGKTTPIPPDAEELGQRTAFHSKRDASTPLRSTENGIVDQVLITTNQEGLKFVKVRVRTTKVPQIGDKFASRHGQKGTIGITYRREDMPFTAEGVVPDLIINPHAIPSRMTVAHLIECLLSKVAALSGNEGDASPFTDITVDGISKLLREHGYQSRGFEVMYNGHTGKKLMAQIFFGPTYYQRLRHMVDDKIHARARGPMQVLTRQPVEGRSRDGGLRFGEMERDCMIAHGAAAFLKERLMEASDAFRVHICGICGLMTVVAKLKHNQFECRGCKNKIDIYQVHIPYAAKLLFQELMAMNIAPRLYTDRSRDF</sequence>
<gene>
    <name type="primary">RPB2</name>
    <name type="ordered locus">AFR404C</name>
</gene>
<organism>
    <name type="scientific">Eremothecium gossypii (strain ATCC 10895 / CBS 109.51 / FGSC 9923 / NRRL Y-1056)</name>
    <name type="common">Yeast</name>
    <name type="synonym">Ashbya gossypii</name>
    <dbReference type="NCBI Taxonomy" id="284811"/>
    <lineage>
        <taxon>Eukaryota</taxon>
        <taxon>Fungi</taxon>
        <taxon>Dikarya</taxon>
        <taxon>Ascomycota</taxon>
        <taxon>Saccharomycotina</taxon>
        <taxon>Saccharomycetes</taxon>
        <taxon>Saccharomycetales</taxon>
        <taxon>Saccharomycetaceae</taxon>
        <taxon>Eremothecium</taxon>
    </lineage>
</organism>
<evidence type="ECO:0000250" key="1"/>
<evidence type="ECO:0000305" key="2"/>
<proteinExistence type="inferred from homology"/>
<name>RPB2_EREGS</name>
<protein>
    <recommendedName>
        <fullName>DNA-directed RNA polymerase II subunit RPB2</fullName>
        <shortName>RNA polymerase II subunit 2</shortName>
        <shortName>RNA polymerase II subunit B2</shortName>
        <ecNumber>2.7.7.6</ecNumber>
    </recommendedName>
</protein>